<feature type="signal peptide" evidence="2">
    <location>
        <begin position="1"/>
        <end position="22"/>
    </location>
</feature>
<feature type="propeptide" id="PRO_0000315429" evidence="1">
    <location>
        <begin position="23"/>
        <end position="48"/>
    </location>
</feature>
<feature type="peptide" id="PRO_0000315430" description="Conotoxin Lt5.5">
    <location>
        <begin position="51"/>
        <end position="61"/>
    </location>
</feature>
<comment type="subcellular location">
    <subcellularLocation>
        <location evidence="5">Secreted</location>
    </subcellularLocation>
</comment>
<comment type="tissue specificity">
    <text evidence="5">Expressed by the venom duct.</text>
</comment>
<comment type="domain">
    <text evidence="4">The cysteine framework is V (CC-CC).</text>
</comment>
<comment type="PTM">
    <text evidence="4">Contains 2 disulfide bonds that can be either 'C1-C3, C2-C4' or 'C1-C4, C2-C3', since these disulfide connectivities have been observed for conotoxins with cysteine framework V (for examples, see AC P0DQQ7 and AC P81755).</text>
</comment>
<comment type="similarity">
    <text evidence="4">Belongs to the conotoxin T superfamily.</text>
</comment>
<dbReference type="EMBL" id="DQ345354">
    <property type="protein sequence ID" value="ABC70190.1"/>
    <property type="molecule type" value="mRNA"/>
</dbReference>
<dbReference type="ConoServer" id="1141">
    <property type="toxin name" value="Lt5e precursor"/>
</dbReference>
<dbReference type="GO" id="GO:0005576">
    <property type="term" value="C:extracellular region"/>
    <property type="evidence" value="ECO:0007669"/>
    <property type="project" value="UniProtKB-SubCell"/>
</dbReference>
<dbReference type="GO" id="GO:0090729">
    <property type="term" value="F:toxin activity"/>
    <property type="evidence" value="ECO:0007669"/>
    <property type="project" value="UniProtKB-KW"/>
</dbReference>
<dbReference type="InterPro" id="IPR031565">
    <property type="entry name" value="T-conotoxin"/>
</dbReference>
<dbReference type="Pfam" id="PF16981">
    <property type="entry name" value="Chi-conotoxin"/>
    <property type="match status" value="1"/>
</dbReference>
<accession>Q1A3R0</accession>
<name>CT55_CONLT</name>
<evidence type="ECO:0000250" key="1"/>
<evidence type="ECO:0000255" key="2"/>
<evidence type="ECO:0000303" key="3">
    <source>
    </source>
</evidence>
<evidence type="ECO:0000305" key="4"/>
<evidence type="ECO:0000305" key="5">
    <source>
    </source>
</evidence>
<evidence type="ECO:0000312" key="6">
    <source>
        <dbReference type="EMBL" id="ABC70190.1"/>
    </source>
</evidence>
<sequence>MRCLQVFIIFLLLIPSPPSVDAQRKTKDDVPLASFHDNAKRTLKRLWNKRSCCPREFLCCLR</sequence>
<protein>
    <recommendedName>
        <fullName evidence="3">Conotoxin Lt5.5</fullName>
    </recommendedName>
    <alternativeName>
        <fullName evidence="6">Lt5e</fullName>
    </alternativeName>
</protein>
<reference key="1">
    <citation type="journal article" date="2006" name="Genomics">
        <title>Diversity and evolution of conotoxins based on gene expression profiling of Conus litteratus.</title>
        <authorList>
            <person name="Pi C."/>
            <person name="Liu J."/>
            <person name="Peng C."/>
            <person name="Liu Y."/>
            <person name="Jiang X."/>
            <person name="Zhao Y."/>
            <person name="Tang S."/>
            <person name="Wang L."/>
            <person name="Dong M."/>
            <person name="Chen S."/>
            <person name="Xu A."/>
        </authorList>
    </citation>
    <scope>NUCLEOTIDE SEQUENCE [MRNA]</scope>
    <source>
        <tissue>Venom duct</tissue>
    </source>
</reference>
<organism>
    <name type="scientific">Conus litteratus</name>
    <name type="common">Lettered cone</name>
    <dbReference type="NCBI Taxonomy" id="89445"/>
    <lineage>
        <taxon>Eukaryota</taxon>
        <taxon>Metazoa</taxon>
        <taxon>Spiralia</taxon>
        <taxon>Lophotrochozoa</taxon>
        <taxon>Mollusca</taxon>
        <taxon>Gastropoda</taxon>
        <taxon>Caenogastropoda</taxon>
        <taxon>Neogastropoda</taxon>
        <taxon>Conoidea</taxon>
        <taxon>Conidae</taxon>
        <taxon>Conus</taxon>
        <taxon>Elisaconus</taxon>
    </lineage>
</organism>
<keyword id="KW-0165">Cleavage on pair of basic residues</keyword>
<keyword id="KW-1015">Disulfide bond</keyword>
<keyword id="KW-0964">Secreted</keyword>
<keyword id="KW-0732">Signal</keyword>
<keyword id="KW-0800">Toxin</keyword>
<proteinExistence type="inferred from homology"/>